<reference key="1">
    <citation type="journal article" date="2001" name="J. Bacteriol.">
        <title>Infrequent genetic exchange and recombination in the mitochondrial genome of Candida albicans.</title>
        <authorList>
            <person name="Anderson J.B."/>
            <person name="Wickens C."/>
            <person name="Khan M."/>
            <person name="Cowen L.E."/>
            <person name="Federspiel N.A."/>
            <person name="Jones T."/>
            <person name="Kohn L.M."/>
        </authorList>
    </citation>
    <scope>NUCLEOTIDE SEQUENCE [LARGE SCALE GENOMIC DNA]</scope>
    <source>
        <strain>SC5314 / ATCC MYA-2876</strain>
    </source>
</reference>
<organism>
    <name type="scientific">Candida albicans (strain SC5314 / ATCC MYA-2876)</name>
    <name type="common">Yeast</name>
    <dbReference type="NCBI Taxonomy" id="237561"/>
    <lineage>
        <taxon>Eukaryota</taxon>
        <taxon>Fungi</taxon>
        <taxon>Dikarya</taxon>
        <taxon>Ascomycota</taxon>
        <taxon>Saccharomycotina</taxon>
        <taxon>Pichiomycetes</taxon>
        <taxon>Debaryomycetaceae</taxon>
        <taxon>Candida/Lodderomyces clade</taxon>
        <taxon>Candida</taxon>
    </lineage>
</organism>
<proteinExistence type="inferred from homology"/>
<dbReference type="EC" id="7.1.1.2"/>
<dbReference type="EMBL" id="AF285261">
    <property type="protein sequence ID" value="AAG59595.2"/>
    <property type="molecule type" value="Genomic_DNA"/>
</dbReference>
<dbReference type="RefSeq" id="NP_075038.2">
    <property type="nucleotide sequence ID" value="NC_002653.1"/>
</dbReference>
<dbReference type="SMR" id="Q9B8D1"/>
<dbReference type="STRING" id="237561.Q9B8D1"/>
<dbReference type="EnsemblFungi" id="CM_00320W-T">
    <property type="protein sequence ID" value="CM_00320W-T-p1"/>
    <property type="gene ID" value="CM_00320W"/>
</dbReference>
<dbReference type="GeneID" id="802552"/>
<dbReference type="KEGG" id="cal:CaalfMp10"/>
<dbReference type="CGD" id="CAL0000179355">
    <property type="gene designation" value="NAD3"/>
</dbReference>
<dbReference type="VEuPathDB" id="FungiDB:CM_00320W"/>
<dbReference type="InParanoid" id="Q9B8D1"/>
<dbReference type="Proteomes" id="UP000000559">
    <property type="component" value="Mitochondrion"/>
</dbReference>
<dbReference type="GO" id="GO:0031966">
    <property type="term" value="C:mitochondrial membrane"/>
    <property type="evidence" value="ECO:0007669"/>
    <property type="project" value="UniProtKB-SubCell"/>
</dbReference>
<dbReference type="GO" id="GO:0045271">
    <property type="term" value="C:respiratory chain complex I"/>
    <property type="evidence" value="ECO:0000250"/>
    <property type="project" value="CGD"/>
</dbReference>
<dbReference type="GO" id="GO:0008137">
    <property type="term" value="F:NADH dehydrogenase (ubiquinone) activity"/>
    <property type="evidence" value="ECO:0000250"/>
    <property type="project" value="CGD"/>
</dbReference>
<dbReference type="GO" id="GO:0006120">
    <property type="term" value="P:mitochondrial electron transport, NADH to ubiquinone"/>
    <property type="evidence" value="ECO:0000250"/>
    <property type="project" value="CGD"/>
</dbReference>
<dbReference type="FunFam" id="1.20.58.1610:FF:000009">
    <property type="entry name" value="NADH-ubiquinone oxidoreductase chain 3"/>
    <property type="match status" value="1"/>
</dbReference>
<dbReference type="Gene3D" id="1.20.58.1610">
    <property type="entry name" value="NADH:ubiquinone/plastoquinone oxidoreductase, chain 3"/>
    <property type="match status" value="1"/>
</dbReference>
<dbReference type="InterPro" id="IPR000440">
    <property type="entry name" value="NADH_UbQ/plastoQ_OxRdtase_su3"/>
</dbReference>
<dbReference type="InterPro" id="IPR038430">
    <property type="entry name" value="NDAH_ubi_oxred_su3_sf"/>
</dbReference>
<dbReference type="PANTHER" id="PTHR11058">
    <property type="entry name" value="NADH-UBIQUINONE OXIDOREDUCTASE CHAIN 3"/>
    <property type="match status" value="1"/>
</dbReference>
<dbReference type="PANTHER" id="PTHR11058:SF9">
    <property type="entry name" value="NADH-UBIQUINONE OXIDOREDUCTASE CHAIN 3"/>
    <property type="match status" value="1"/>
</dbReference>
<dbReference type="Pfam" id="PF00507">
    <property type="entry name" value="Oxidored_q4"/>
    <property type="match status" value="1"/>
</dbReference>
<evidence type="ECO:0000250" key="1"/>
<evidence type="ECO:0000255" key="2"/>
<evidence type="ECO:0000305" key="3"/>
<evidence type="ECO:0000312" key="4">
    <source>
        <dbReference type="CGD" id="CAL0000179355"/>
    </source>
</evidence>
<geneLocation type="mitochondrion"/>
<name>NU3M_CANAL</name>
<accession>Q9B8D1</accession>
<comment type="function">
    <text evidence="1">Core subunit of the mitochondrial membrane respiratory chain NADH dehydrogenase (Complex I) that is believed to belong to the minimal assembly required for catalysis. Complex I functions in the transfer of electrons from NADH to the respiratory chain. The immediate electron acceptor for the enzyme is believed to be ubiquinone (By similarity).</text>
</comment>
<comment type="catalytic activity">
    <reaction>
        <text>a ubiquinone + NADH + 5 H(+)(in) = a ubiquinol + NAD(+) + 4 H(+)(out)</text>
        <dbReference type="Rhea" id="RHEA:29091"/>
        <dbReference type="Rhea" id="RHEA-COMP:9565"/>
        <dbReference type="Rhea" id="RHEA-COMP:9566"/>
        <dbReference type="ChEBI" id="CHEBI:15378"/>
        <dbReference type="ChEBI" id="CHEBI:16389"/>
        <dbReference type="ChEBI" id="CHEBI:17976"/>
        <dbReference type="ChEBI" id="CHEBI:57540"/>
        <dbReference type="ChEBI" id="CHEBI:57945"/>
        <dbReference type="EC" id="7.1.1.2"/>
    </reaction>
</comment>
<comment type="subcellular location">
    <subcellularLocation>
        <location evidence="1">Mitochondrion membrane</location>
        <topology evidence="1">Multi-pass membrane protein</topology>
    </subcellularLocation>
</comment>
<comment type="similarity">
    <text evidence="3">Belongs to the complex I subunit 3 family.</text>
</comment>
<feature type="chain" id="PRO_0000356877" description="NADH-ubiquinone oxidoreductase chain 3">
    <location>
        <begin position="1"/>
        <end position="129"/>
    </location>
</feature>
<feature type="transmembrane region" description="Helical" evidence="2">
    <location>
        <begin position="4"/>
        <end position="24"/>
    </location>
</feature>
<feature type="transmembrane region" description="Helical" evidence="2">
    <location>
        <begin position="48"/>
        <end position="68"/>
    </location>
</feature>
<feature type="transmembrane region" description="Helical" evidence="2">
    <location>
        <begin position="82"/>
        <end position="102"/>
    </location>
</feature>
<gene>
    <name type="primary">NAD3</name>
    <name evidence="4" type="ordered locus">CM_00320W</name>
    <name type="ORF">CaalfMp10</name>
</gene>
<sequence length="129" mass="14706">MFTFYMYLAPIVAGVLIGLNWLLAKSNPNIDKAGPFECGFTSYQQSRAAFSVAFILVAILFLPFDLEISSILPYVTSAYNNGLYGLIILIIFLMMLVIAFILEIQLRVLKIERSYDKDRSDSNYYDHEI</sequence>
<protein>
    <recommendedName>
        <fullName>NADH-ubiquinone oxidoreductase chain 3</fullName>
        <ecNumber>7.1.1.2</ecNumber>
    </recommendedName>
    <alternativeName>
        <fullName>NADH dehydrogenase subunit 3</fullName>
    </alternativeName>
</protein>
<keyword id="KW-0249">Electron transport</keyword>
<keyword id="KW-0472">Membrane</keyword>
<keyword id="KW-0496">Mitochondrion</keyword>
<keyword id="KW-0520">NAD</keyword>
<keyword id="KW-1185">Reference proteome</keyword>
<keyword id="KW-0679">Respiratory chain</keyword>
<keyword id="KW-1278">Translocase</keyword>
<keyword id="KW-0812">Transmembrane</keyword>
<keyword id="KW-1133">Transmembrane helix</keyword>
<keyword id="KW-0813">Transport</keyword>
<keyword id="KW-0830">Ubiquinone</keyword>